<name>Y3986_XANOM</name>
<evidence type="ECO:0000255" key="1">
    <source>
        <dbReference type="HAMAP-Rule" id="MF_01361"/>
    </source>
</evidence>
<reference key="1">
    <citation type="journal article" date="2005" name="Jpn. Agric. Res. Q.">
        <title>Genome sequence of Xanthomonas oryzae pv. oryzae suggests contribution of large numbers of effector genes and insertion sequences to its race diversity.</title>
        <authorList>
            <person name="Ochiai H."/>
            <person name="Inoue Y."/>
            <person name="Takeya M."/>
            <person name="Sasaki A."/>
            <person name="Kaku H."/>
        </authorList>
    </citation>
    <scope>NUCLEOTIDE SEQUENCE [LARGE SCALE GENOMIC DNA]</scope>
    <source>
        <strain>MAFF 311018</strain>
    </source>
</reference>
<protein>
    <recommendedName>
        <fullName evidence="1">UPF0391 membrane protein XOO3986</fullName>
    </recommendedName>
</protein>
<dbReference type="EMBL" id="AP008229">
    <property type="protein sequence ID" value="BAE70741.1"/>
    <property type="molecule type" value="Genomic_DNA"/>
</dbReference>
<dbReference type="RefSeq" id="WP_011260548.1">
    <property type="nucleotide sequence ID" value="NC_007705.1"/>
</dbReference>
<dbReference type="KEGG" id="xom:XOO3986"/>
<dbReference type="HOGENOM" id="CLU_187346_0_1_6"/>
<dbReference type="GO" id="GO:0005886">
    <property type="term" value="C:plasma membrane"/>
    <property type="evidence" value="ECO:0007669"/>
    <property type="project" value="UniProtKB-SubCell"/>
</dbReference>
<dbReference type="HAMAP" id="MF_01361">
    <property type="entry name" value="UPF0391"/>
    <property type="match status" value="1"/>
</dbReference>
<dbReference type="InterPro" id="IPR009760">
    <property type="entry name" value="DUF1328"/>
</dbReference>
<dbReference type="NCBIfam" id="NF010226">
    <property type="entry name" value="PRK13682.1-1"/>
    <property type="match status" value="1"/>
</dbReference>
<dbReference type="NCBIfam" id="NF010229">
    <property type="entry name" value="PRK13682.1-4"/>
    <property type="match status" value="1"/>
</dbReference>
<dbReference type="Pfam" id="PF07043">
    <property type="entry name" value="DUF1328"/>
    <property type="match status" value="1"/>
</dbReference>
<dbReference type="PIRSF" id="PIRSF036466">
    <property type="entry name" value="UCP036466"/>
    <property type="match status" value="1"/>
</dbReference>
<proteinExistence type="inferred from homology"/>
<organism>
    <name type="scientific">Xanthomonas oryzae pv. oryzae (strain MAFF 311018)</name>
    <dbReference type="NCBI Taxonomy" id="342109"/>
    <lineage>
        <taxon>Bacteria</taxon>
        <taxon>Pseudomonadati</taxon>
        <taxon>Pseudomonadota</taxon>
        <taxon>Gammaproteobacteria</taxon>
        <taxon>Lysobacterales</taxon>
        <taxon>Lysobacteraceae</taxon>
        <taxon>Xanthomonas</taxon>
    </lineage>
</organism>
<feature type="chain" id="PRO_0000256807" description="UPF0391 membrane protein XOO3986">
    <location>
        <begin position="1"/>
        <end position="52"/>
    </location>
</feature>
<feature type="transmembrane region" description="Helical" evidence="1">
    <location>
        <begin position="5"/>
        <end position="25"/>
    </location>
</feature>
<feature type="transmembrane region" description="Helical" evidence="1">
    <location>
        <begin position="27"/>
        <end position="47"/>
    </location>
</feature>
<gene>
    <name type="ordered locus">XOO3986</name>
</gene>
<keyword id="KW-1003">Cell membrane</keyword>
<keyword id="KW-0472">Membrane</keyword>
<keyword id="KW-0812">Transmembrane</keyword>
<keyword id="KW-1133">Transmembrane helix</keyword>
<sequence length="52" mass="5658">MLHYAMIFFVIAIIAAVLGFSGIAGAATNIAWILFVVFLILAVISMFRRGKV</sequence>
<accession>Q2NY86</accession>
<comment type="subcellular location">
    <subcellularLocation>
        <location evidence="1">Cell membrane</location>
        <topology evidence="1">Multi-pass membrane protein</topology>
    </subcellularLocation>
</comment>
<comment type="similarity">
    <text evidence="1">Belongs to the UPF0391 family.</text>
</comment>